<accession>Q50303</accession>
<name>RL6_MYCPN</name>
<keyword id="KW-0002">3D-structure</keyword>
<keyword id="KW-1185">Reference proteome</keyword>
<keyword id="KW-0687">Ribonucleoprotein</keyword>
<keyword id="KW-0689">Ribosomal protein</keyword>
<keyword id="KW-0694">RNA-binding</keyword>
<keyword id="KW-0699">rRNA-binding</keyword>
<organism>
    <name type="scientific">Mycoplasma pneumoniae (strain ATCC 29342 / M129 / Subtype 1)</name>
    <name type="common">Mycoplasmoides pneumoniae</name>
    <dbReference type="NCBI Taxonomy" id="272634"/>
    <lineage>
        <taxon>Bacteria</taxon>
        <taxon>Bacillati</taxon>
        <taxon>Mycoplasmatota</taxon>
        <taxon>Mycoplasmoidales</taxon>
        <taxon>Mycoplasmoidaceae</taxon>
        <taxon>Mycoplasmoides</taxon>
    </lineage>
</organism>
<evidence type="ECO:0000255" key="1">
    <source>
        <dbReference type="HAMAP-Rule" id="MF_01365"/>
    </source>
</evidence>
<evidence type="ECO:0000305" key="2"/>
<evidence type="ECO:0007829" key="3">
    <source>
        <dbReference type="PDB" id="8P8B"/>
    </source>
</evidence>
<sequence>MSKIGNRTITLDPAKVNLNFQKDHIAVKGPLGQIELKLPPNLPLKFELKDNNLQITRNNELKQSKIFHGTYNALITNAIIGVTQGFEKKLRLVGVGYRANVEGETLNLQLGYSHPIKEKIPKGLTVKVEKNTEITISGISKELVGQFATEVRKWRKPEPYKGKGVLYFDEVIVRKAGKTAEGKK</sequence>
<feature type="chain" id="PRO_0000131061" description="Large ribosomal subunit protein uL6">
    <location>
        <begin position="1"/>
        <end position="184"/>
    </location>
</feature>
<feature type="turn" evidence="3">
    <location>
        <begin position="13"/>
        <end position="15"/>
    </location>
</feature>
<feature type="strand" evidence="3">
    <location>
        <begin position="17"/>
        <end position="20"/>
    </location>
</feature>
<feature type="strand" evidence="3">
    <location>
        <begin position="22"/>
        <end position="31"/>
    </location>
</feature>
<feature type="strand" evidence="3">
    <location>
        <begin position="34"/>
        <end position="37"/>
    </location>
</feature>
<feature type="strand" evidence="3">
    <location>
        <begin position="43"/>
        <end position="48"/>
    </location>
</feature>
<feature type="strand" evidence="3">
    <location>
        <begin position="53"/>
        <end position="59"/>
    </location>
</feature>
<feature type="helix" evidence="3">
    <location>
        <begin position="62"/>
        <end position="83"/>
    </location>
</feature>
<feature type="strand" evidence="3">
    <location>
        <begin position="86"/>
        <end position="96"/>
    </location>
</feature>
<feature type="strand" evidence="3">
    <location>
        <begin position="98"/>
        <end position="102"/>
    </location>
</feature>
<feature type="strand" evidence="3">
    <location>
        <begin position="105"/>
        <end position="111"/>
    </location>
</feature>
<feature type="strand" evidence="3">
    <location>
        <begin position="116"/>
        <end position="119"/>
    </location>
</feature>
<feature type="strand" evidence="3">
    <location>
        <begin position="125"/>
        <end position="127"/>
    </location>
</feature>
<feature type="strand" evidence="3">
    <location>
        <begin position="133"/>
        <end position="139"/>
    </location>
</feature>
<feature type="helix" evidence="3">
    <location>
        <begin position="141"/>
        <end position="152"/>
    </location>
</feature>
<feature type="strand" evidence="3">
    <location>
        <begin position="159"/>
        <end position="162"/>
    </location>
</feature>
<feature type="strand" evidence="3">
    <location>
        <begin position="164"/>
        <end position="167"/>
    </location>
</feature>
<protein>
    <recommendedName>
        <fullName evidence="1">Large ribosomal subunit protein uL6</fullName>
    </recommendedName>
    <alternativeName>
        <fullName evidence="2">50S ribosomal protein L6</fullName>
    </alternativeName>
</protein>
<comment type="function">
    <text evidence="1">This protein binds to the 23S rRNA, and is important in its secondary structure. It is located near the subunit interface in the base of the L7/L12 stalk, and near the tRNA binding site of the peptidyltransferase center.</text>
</comment>
<comment type="subunit">
    <text evidence="1">Part of the 50S ribosomal subunit.</text>
</comment>
<comment type="similarity">
    <text evidence="1">Belongs to the universal ribosomal protein uL6 family.</text>
</comment>
<dbReference type="EMBL" id="U34795">
    <property type="protein sequence ID" value="AAC43701.1"/>
    <property type="molecule type" value="Genomic_DNA"/>
</dbReference>
<dbReference type="EMBL" id="U00089">
    <property type="protein sequence ID" value="AAB96299.1"/>
    <property type="molecule type" value="Genomic_DNA"/>
</dbReference>
<dbReference type="PIR" id="S62827">
    <property type="entry name" value="S62827"/>
</dbReference>
<dbReference type="RefSeq" id="NP_109868.1">
    <property type="nucleotide sequence ID" value="NC_000912.1"/>
</dbReference>
<dbReference type="RefSeq" id="WP_010874537.1">
    <property type="nucleotide sequence ID" value="NZ_OU342337.1"/>
</dbReference>
<dbReference type="PDB" id="7OOD">
    <property type="method" value="EM"/>
    <property type="resolution" value="3.40 A"/>
    <property type="chains" value="e=1-184"/>
</dbReference>
<dbReference type="PDB" id="7P6Z">
    <property type="method" value="EM"/>
    <property type="resolution" value="3.50 A"/>
    <property type="chains" value="e=1-184"/>
</dbReference>
<dbReference type="PDB" id="7PAH">
    <property type="method" value="EM"/>
    <property type="resolution" value="9.50 A"/>
    <property type="chains" value="e=1-184"/>
</dbReference>
<dbReference type="PDB" id="7PAI">
    <property type="method" value="EM"/>
    <property type="resolution" value="6.70 A"/>
    <property type="chains" value="e=1-184"/>
</dbReference>
<dbReference type="PDB" id="7PAJ">
    <property type="method" value="EM"/>
    <property type="resolution" value="7.30 A"/>
    <property type="chains" value="e=1-184"/>
</dbReference>
<dbReference type="PDB" id="7PAK">
    <property type="method" value="EM"/>
    <property type="resolution" value="5.30 A"/>
    <property type="chains" value="e=1-184"/>
</dbReference>
<dbReference type="PDB" id="7PAL">
    <property type="method" value="EM"/>
    <property type="resolution" value="4.70 A"/>
    <property type="chains" value="e=1-184"/>
</dbReference>
<dbReference type="PDB" id="7PAM">
    <property type="method" value="EM"/>
    <property type="resolution" value="6.80 A"/>
    <property type="chains" value="e=1-184"/>
</dbReference>
<dbReference type="PDB" id="7PAN">
    <property type="method" value="EM"/>
    <property type="resolution" value="9.70 A"/>
    <property type="chains" value="e=1-184"/>
</dbReference>
<dbReference type="PDB" id="7PAO">
    <property type="method" value="EM"/>
    <property type="resolution" value="7.00 A"/>
    <property type="chains" value="e=1-184"/>
</dbReference>
<dbReference type="PDB" id="7PAQ">
    <property type="method" value="EM"/>
    <property type="resolution" value="8.90 A"/>
    <property type="chains" value="e=1-184"/>
</dbReference>
<dbReference type="PDB" id="7PAR">
    <property type="method" value="EM"/>
    <property type="resolution" value="8.20 A"/>
    <property type="chains" value="e=1-184"/>
</dbReference>
<dbReference type="PDB" id="7PAS">
    <property type="method" value="EM"/>
    <property type="resolution" value="16.00 A"/>
    <property type="chains" value="e=1-184"/>
</dbReference>
<dbReference type="PDB" id="7PAT">
    <property type="method" value="EM"/>
    <property type="resolution" value="9.20 A"/>
    <property type="chains" value="e=1-184"/>
</dbReference>
<dbReference type="PDB" id="7PAU">
    <property type="method" value="EM"/>
    <property type="resolution" value="8.30 A"/>
    <property type="chains" value="e=1-184"/>
</dbReference>
<dbReference type="PDB" id="7PH9">
    <property type="method" value="EM"/>
    <property type="resolution" value="8.70 A"/>
    <property type="chains" value="e=1-184"/>
</dbReference>
<dbReference type="PDB" id="7PHA">
    <property type="method" value="EM"/>
    <property type="resolution" value="8.50 A"/>
    <property type="chains" value="e=1-184"/>
</dbReference>
<dbReference type="PDB" id="7PHB">
    <property type="method" value="EM"/>
    <property type="resolution" value="4.90 A"/>
    <property type="chains" value="e=1-184"/>
</dbReference>
<dbReference type="PDB" id="7PHC">
    <property type="method" value="EM"/>
    <property type="resolution" value="9.90 A"/>
    <property type="chains" value="e=1-184"/>
</dbReference>
<dbReference type="PDB" id="7PI8">
    <property type="method" value="EM"/>
    <property type="resolution" value="8.90 A"/>
    <property type="chains" value="e=1-184"/>
</dbReference>
<dbReference type="PDB" id="7PI9">
    <property type="method" value="EM"/>
    <property type="resolution" value="6.30 A"/>
    <property type="chains" value="e=1-184"/>
</dbReference>
<dbReference type="PDB" id="7PIA">
    <property type="method" value="EM"/>
    <property type="resolution" value="13.60 A"/>
    <property type="chains" value="e=1-184"/>
</dbReference>
<dbReference type="PDB" id="7PIB">
    <property type="method" value="EM"/>
    <property type="resolution" value="4.70 A"/>
    <property type="chains" value="e=1-184"/>
</dbReference>
<dbReference type="PDB" id="7PIC">
    <property type="method" value="EM"/>
    <property type="resolution" value="9.10 A"/>
    <property type="chains" value="e=1-184"/>
</dbReference>
<dbReference type="PDB" id="7PIO">
    <property type="method" value="EM"/>
    <property type="resolution" value="9.50 A"/>
    <property type="chains" value="e=1-184"/>
</dbReference>
<dbReference type="PDB" id="7PIP">
    <property type="method" value="EM"/>
    <property type="resolution" value="9.30 A"/>
    <property type="chains" value="e=1-184"/>
</dbReference>
<dbReference type="PDB" id="7PIQ">
    <property type="method" value="EM"/>
    <property type="resolution" value="9.70 A"/>
    <property type="chains" value="e=1-184"/>
</dbReference>
<dbReference type="PDB" id="7PIR">
    <property type="method" value="EM"/>
    <property type="resolution" value="12.10 A"/>
    <property type="chains" value="e=1-184"/>
</dbReference>
<dbReference type="PDB" id="7PIS">
    <property type="method" value="EM"/>
    <property type="resolution" value="15.00 A"/>
    <property type="chains" value="e=1-184"/>
</dbReference>
<dbReference type="PDB" id="7PIT">
    <property type="method" value="EM"/>
    <property type="resolution" value="5.70 A"/>
    <property type="chains" value="e=1-184"/>
</dbReference>
<dbReference type="PDB" id="8P7X">
    <property type="method" value="EM"/>
    <property type="resolution" value="3.03 A"/>
    <property type="chains" value="e=1-184"/>
</dbReference>
<dbReference type="PDB" id="8P7Y">
    <property type="method" value="EM"/>
    <property type="resolution" value="3.70 A"/>
    <property type="chains" value="e=1-184"/>
</dbReference>
<dbReference type="PDB" id="8P8B">
    <property type="method" value="EM"/>
    <property type="resolution" value="2.90 A"/>
    <property type="chains" value="e=1-184"/>
</dbReference>
<dbReference type="PDB" id="8P8V">
    <property type="method" value="EM"/>
    <property type="resolution" value="8.70 A"/>
    <property type="chains" value="e=1-184"/>
</dbReference>
<dbReference type="PDB" id="8P8W">
    <property type="method" value="EM"/>
    <property type="resolution" value="8.70 A"/>
    <property type="chains" value="e=1-184"/>
</dbReference>
<dbReference type="PDBsum" id="7OOD"/>
<dbReference type="PDBsum" id="7P6Z"/>
<dbReference type="PDBsum" id="7PAH"/>
<dbReference type="PDBsum" id="7PAI"/>
<dbReference type="PDBsum" id="7PAJ"/>
<dbReference type="PDBsum" id="7PAK"/>
<dbReference type="PDBsum" id="7PAL"/>
<dbReference type="PDBsum" id="7PAM"/>
<dbReference type="PDBsum" id="7PAN"/>
<dbReference type="PDBsum" id="7PAO"/>
<dbReference type="PDBsum" id="7PAQ"/>
<dbReference type="PDBsum" id="7PAR"/>
<dbReference type="PDBsum" id="7PAS"/>
<dbReference type="PDBsum" id="7PAT"/>
<dbReference type="PDBsum" id="7PAU"/>
<dbReference type="PDBsum" id="7PH9"/>
<dbReference type="PDBsum" id="7PHA"/>
<dbReference type="PDBsum" id="7PHB"/>
<dbReference type="PDBsum" id="7PHC"/>
<dbReference type="PDBsum" id="7PI8"/>
<dbReference type="PDBsum" id="7PI9"/>
<dbReference type="PDBsum" id="7PIA"/>
<dbReference type="PDBsum" id="7PIB"/>
<dbReference type="PDBsum" id="7PIC"/>
<dbReference type="PDBsum" id="7PIO"/>
<dbReference type="PDBsum" id="7PIP"/>
<dbReference type="PDBsum" id="7PIQ"/>
<dbReference type="PDBsum" id="7PIR"/>
<dbReference type="PDBsum" id="7PIS"/>
<dbReference type="PDBsum" id="7PIT"/>
<dbReference type="PDBsum" id="8P7X"/>
<dbReference type="PDBsum" id="8P7Y"/>
<dbReference type="PDBsum" id="8P8B"/>
<dbReference type="PDBsum" id="8P8V"/>
<dbReference type="PDBsum" id="8P8W"/>
<dbReference type="EMDB" id="EMD-13234"/>
<dbReference type="EMDB" id="EMD-13272"/>
<dbReference type="EMDB" id="EMD-13273"/>
<dbReference type="EMDB" id="EMD-13274"/>
<dbReference type="EMDB" id="EMD-13275"/>
<dbReference type="EMDB" id="EMD-13276"/>
<dbReference type="EMDB" id="EMD-13277"/>
<dbReference type="EMDB" id="EMD-13278"/>
<dbReference type="EMDB" id="EMD-13279"/>
<dbReference type="EMDB" id="EMD-13280"/>
<dbReference type="EMDB" id="EMD-13281"/>
<dbReference type="EMDB" id="EMD-13282"/>
<dbReference type="EMDB" id="EMD-13285"/>
<dbReference type="EMDB" id="EMD-13286"/>
<dbReference type="EMDB" id="EMD-13410"/>
<dbReference type="EMDB" id="EMD-13411"/>
<dbReference type="EMDB" id="EMD-13412"/>
<dbReference type="EMDB" id="EMD-13413"/>
<dbReference type="EMDB" id="EMD-13432"/>
<dbReference type="EMDB" id="EMD-13433"/>
<dbReference type="EMDB" id="EMD-13434"/>
<dbReference type="EMDB" id="EMD-13435"/>
<dbReference type="EMDB" id="EMD-13436"/>
<dbReference type="EMDB" id="EMD-13445"/>
<dbReference type="EMDB" id="EMD-13446"/>
<dbReference type="EMDB" id="EMD-13447"/>
<dbReference type="EMDB" id="EMD-13448"/>
<dbReference type="EMDB" id="EMD-13449"/>
<dbReference type="EMDB" id="EMD-13450"/>
<dbReference type="SMR" id="Q50303"/>
<dbReference type="IntAct" id="Q50303">
    <property type="interactions" value="1"/>
</dbReference>
<dbReference type="STRING" id="272634.MPN_180"/>
<dbReference type="EnsemblBacteria" id="AAB96299">
    <property type="protein sequence ID" value="AAB96299"/>
    <property type="gene ID" value="MPN_180"/>
</dbReference>
<dbReference type="KEGG" id="mpn:MPN_180"/>
<dbReference type="PATRIC" id="fig|272634.6.peg.198"/>
<dbReference type="HOGENOM" id="CLU_065464_1_2_14"/>
<dbReference type="OrthoDB" id="9805007at2"/>
<dbReference type="BioCyc" id="MPNE272634:G1GJ3-293-MONOMER"/>
<dbReference type="Proteomes" id="UP000000808">
    <property type="component" value="Chromosome"/>
</dbReference>
<dbReference type="GO" id="GO:0022625">
    <property type="term" value="C:cytosolic large ribosomal subunit"/>
    <property type="evidence" value="ECO:0007669"/>
    <property type="project" value="TreeGrafter"/>
</dbReference>
<dbReference type="GO" id="GO:0019843">
    <property type="term" value="F:rRNA binding"/>
    <property type="evidence" value="ECO:0007669"/>
    <property type="project" value="UniProtKB-UniRule"/>
</dbReference>
<dbReference type="GO" id="GO:0003735">
    <property type="term" value="F:structural constituent of ribosome"/>
    <property type="evidence" value="ECO:0007669"/>
    <property type="project" value="InterPro"/>
</dbReference>
<dbReference type="GO" id="GO:0002181">
    <property type="term" value="P:cytoplasmic translation"/>
    <property type="evidence" value="ECO:0007669"/>
    <property type="project" value="TreeGrafter"/>
</dbReference>
<dbReference type="FunFam" id="3.90.930.12:FF:000001">
    <property type="entry name" value="50S ribosomal protein L6"/>
    <property type="match status" value="1"/>
</dbReference>
<dbReference type="Gene3D" id="3.90.930.12">
    <property type="entry name" value="Ribosomal protein L6, alpha-beta domain"/>
    <property type="match status" value="2"/>
</dbReference>
<dbReference type="HAMAP" id="MF_01365_B">
    <property type="entry name" value="Ribosomal_uL6_B"/>
    <property type="match status" value="1"/>
</dbReference>
<dbReference type="InterPro" id="IPR000702">
    <property type="entry name" value="Ribosomal_uL6-like"/>
</dbReference>
<dbReference type="InterPro" id="IPR036789">
    <property type="entry name" value="Ribosomal_uL6-like_a/b-dom_sf"/>
</dbReference>
<dbReference type="InterPro" id="IPR020040">
    <property type="entry name" value="Ribosomal_uL6_a/b-dom"/>
</dbReference>
<dbReference type="InterPro" id="IPR019906">
    <property type="entry name" value="Ribosomal_uL6_bac-type"/>
</dbReference>
<dbReference type="InterPro" id="IPR002358">
    <property type="entry name" value="Ribosomal_uL6_CS"/>
</dbReference>
<dbReference type="NCBIfam" id="TIGR03654">
    <property type="entry name" value="L6_bact"/>
    <property type="match status" value="1"/>
</dbReference>
<dbReference type="PANTHER" id="PTHR11655">
    <property type="entry name" value="60S/50S RIBOSOMAL PROTEIN L6/L9"/>
    <property type="match status" value="1"/>
</dbReference>
<dbReference type="PANTHER" id="PTHR11655:SF14">
    <property type="entry name" value="LARGE RIBOSOMAL SUBUNIT PROTEIN UL6M"/>
    <property type="match status" value="1"/>
</dbReference>
<dbReference type="Pfam" id="PF00347">
    <property type="entry name" value="Ribosomal_L6"/>
    <property type="match status" value="2"/>
</dbReference>
<dbReference type="PIRSF" id="PIRSF002162">
    <property type="entry name" value="Ribosomal_L6"/>
    <property type="match status" value="1"/>
</dbReference>
<dbReference type="PRINTS" id="PR00059">
    <property type="entry name" value="RIBOSOMALL6"/>
</dbReference>
<dbReference type="SUPFAM" id="SSF56053">
    <property type="entry name" value="Ribosomal protein L6"/>
    <property type="match status" value="2"/>
</dbReference>
<dbReference type="PROSITE" id="PS00525">
    <property type="entry name" value="RIBOSOMAL_L6_1"/>
    <property type="match status" value="1"/>
</dbReference>
<gene>
    <name evidence="1" type="primary">rplF</name>
    <name type="ordered locus">MPN_180</name>
    <name type="ORF">MP651</name>
</gene>
<reference key="1">
    <citation type="journal article" date="1996" name="Nucleic Acids Res.">
        <title>Sequence analysis of 56 kb from the genome of the bacterium Mycoplasma pneumoniae comprising the dnaA region, the atp operon and a cluster of ribosomal protein genes.</title>
        <authorList>
            <person name="Hilbert H."/>
            <person name="Himmelreich R."/>
            <person name="Plagens H."/>
            <person name="Herrmann R."/>
        </authorList>
    </citation>
    <scope>NUCLEOTIDE SEQUENCE [GENOMIC DNA]</scope>
    <source>
        <strain>ATCC 29342 / M129 / Subtype 1</strain>
    </source>
</reference>
<reference key="2">
    <citation type="journal article" date="1996" name="Nucleic Acids Res.">
        <title>Complete sequence analysis of the genome of the bacterium Mycoplasma pneumoniae.</title>
        <authorList>
            <person name="Himmelreich R."/>
            <person name="Hilbert H."/>
            <person name="Plagens H."/>
            <person name="Pirkl E."/>
            <person name="Li B.-C."/>
            <person name="Herrmann R."/>
        </authorList>
    </citation>
    <scope>NUCLEOTIDE SEQUENCE [LARGE SCALE GENOMIC DNA]</scope>
    <source>
        <strain>ATCC 29342 / M129 / Subtype 1</strain>
    </source>
</reference>
<proteinExistence type="evidence at protein level"/>